<reference key="1">
    <citation type="journal article" date="2005" name="J. Bacteriol.">
        <title>Insights on evolution of virulence and resistance from the complete genome analysis of an early methicillin-resistant Staphylococcus aureus strain and a biofilm-producing methicillin-resistant Staphylococcus epidermidis strain.</title>
        <authorList>
            <person name="Gill S.R."/>
            <person name="Fouts D.E."/>
            <person name="Archer G.L."/>
            <person name="Mongodin E.F."/>
            <person name="DeBoy R.T."/>
            <person name="Ravel J."/>
            <person name="Paulsen I.T."/>
            <person name="Kolonay J.F."/>
            <person name="Brinkac L.M."/>
            <person name="Beanan M.J."/>
            <person name="Dodson R.J."/>
            <person name="Daugherty S.C."/>
            <person name="Madupu R."/>
            <person name="Angiuoli S.V."/>
            <person name="Durkin A.S."/>
            <person name="Haft D.H."/>
            <person name="Vamathevan J.J."/>
            <person name="Khouri H."/>
            <person name="Utterback T.R."/>
            <person name="Lee C."/>
            <person name="Dimitrov G."/>
            <person name="Jiang L."/>
            <person name="Qin H."/>
            <person name="Weidman J."/>
            <person name="Tran K."/>
            <person name="Kang K.H."/>
            <person name="Hance I.R."/>
            <person name="Nelson K.E."/>
            <person name="Fraser C.M."/>
        </authorList>
    </citation>
    <scope>NUCLEOTIDE SEQUENCE [LARGE SCALE GENOMIC DNA]</scope>
    <source>
        <strain>ATCC 35984 / DSM 28319 / BCRC 17069 / CCUG 31568 / BM 3577 / RP62A</strain>
    </source>
</reference>
<name>DAPE_STAEQ</name>
<organism>
    <name type="scientific">Staphylococcus epidermidis (strain ATCC 35984 / DSM 28319 / BCRC 17069 / CCUG 31568 / BM 3577 / RP62A)</name>
    <dbReference type="NCBI Taxonomy" id="176279"/>
    <lineage>
        <taxon>Bacteria</taxon>
        <taxon>Bacillati</taxon>
        <taxon>Bacillota</taxon>
        <taxon>Bacilli</taxon>
        <taxon>Bacillales</taxon>
        <taxon>Staphylococcaceae</taxon>
        <taxon>Staphylococcus</taxon>
    </lineage>
</organism>
<proteinExistence type="inferred from homology"/>
<sequence length="405" mass="45002">MTVLSEQDKIRLLADIVKIQTENDHEIEVCEYLKDLLSQYDIDSKIVKVNDSRANLVAEIGSGAPVLAISGHMDVVDAGDHDDWTFPPFELTDKDGKLFGRGTTDMKGGLMAMVIAMIELKQSNALKQGTIRLLATTGEETEQYGAQLLADEGYLDDVSGLIIGEPTSNIAYYAHKGSMSCVVTAKGKAAHSSMPHLGTNAVDILVDFVNEMKQEYKNIKEHDKVHELDAVPMIEKHLHRKIGEEESHIYSGFVMLNSVFNGGKQVNSVPHKATAKYNVRTVPEYDSTFVKDLFEKVIRHVGEDYLTVDIPSSHDPVASDRDNPLIQNITRIAPNYVHEDIVVSALIGTTDASSFLGTNENNVDFAVFGPGESIMAHRVDEFIRKDMYLSYIDVYKDVFKAYLEK</sequence>
<evidence type="ECO:0000250" key="1"/>
<evidence type="ECO:0000305" key="2"/>
<gene>
    <name type="primary">dapE</name>
    <name type="ordered locus">SERP2364</name>
</gene>
<feature type="chain" id="PRO_0000185270" description="Probable succinyl-diaminopimelate desuccinylase">
    <location>
        <begin position="1"/>
        <end position="405"/>
    </location>
</feature>
<feature type="active site" evidence="1">
    <location>
        <position position="74"/>
    </location>
</feature>
<feature type="active site" description="Proton acceptor" evidence="1">
    <location>
        <position position="139"/>
    </location>
</feature>
<feature type="binding site" evidence="1">
    <location>
        <position position="72"/>
    </location>
    <ligand>
        <name>Zn(2+)</name>
        <dbReference type="ChEBI" id="CHEBI:29105"/>
        <label>1</label>
    </ligand>
</feature>
<feature type="binding site" evidence="1">
    <location>
        <position position="105"/>
    </location>
    <ligand>
        <name>Zn(2+)</name>
        <dbReference type="ChEBI" id="CHEBI:29105"/>
        <label>1</label>
    </ligand>
</feature>
<feature type="binding site" evidence="1">
    <location>
        <position position="105"/>
    </location>
    <ligand>
        <name>Zn(2+)</name>
        <dbReference type="ChEBI" id="CHEBI:29105"/>
        <label>2</label>
    </ligand>
</feature>
<feature type="binding site" evidence="1">
    <location>
        <position position="140"/>
    </location>
    <ligand>
        <name>Zn(2+)</name>
        <dbReference type="ChEBI" id="CHEBI:29105"/>
        <label>2</label>
    </ligand>
</feature>
<feature type="binding site" evidence="1">
    <location>
        <position position="165"/>
    </location>
    <ligand>
        <name>Zn(2+)</name>
        <dbReference type="ChEBI" id="CHEBI:29105"/>
        <label>1</label>
    </ligand>
</feature>
<feature type="binding site" evidence="1">
    <location>
        <position position="377"/>
    </location>
    <ligand>
        <name>Zn(2+)</name>
        <dbReference type="ChEBI" id="CHEBI:29105"/>
        <label>2</label>
    </ligand>
</feature>
<accession>Q5HKI1</accession>
<comment type="catalytic activity">
    <reaction>
        <text>N-succinyl-(2S,6S)-2,6-diaminopimelate + H2O = (2S,6S)-2,6-diaminopimelate + succinate</text>
        <dbReference type="Rhea" id="RHEA:22608"/>
        <dbReference type="ChEBI" id="CHEBI:15377"/>
        <dbReference type="ChEBI" id="CHEBI:30031"/>
        <dbReference type="ChEBI" id="CHEBI:57609"/>
        <dbReference type="ChEBI" id="CHEBI:58087"/>
        <dbReference type="EC" id="3.5.1.18"/>
    </reaction>
</comment>
<comment type="cofactor">
    <cofactor evidence="1">
        <name>Zn(2+)</name>
        <dbReference type="ChEBI" id="CHEBI:29105"/>
    </cofactor>
    <cofactor evidence="1">
        <name>Co(2+)</name>
        <dbReference type="ChEBI" id="CHEBI:48828"/>
    </cofactor>
    <text evidence="1">Binds 2 Zn(2+) or Co(2+) ions per subunit.</text>
</comment>
<comment type="pathway">
    <text>Amino-acid biosynthesis; L-lysine biosynthesis via DAP pathway; LL-2,6-diaminopimelate from (S)-tetrahydrodipicolinate (succinylase route): step 3/3.</text>
</comment>
<comment type="similarity">
    <text evidence="2">Belongs to the peptidase M20A family.</text>
</comment>
<dbReference type="EC" id="3.5.1.18"/>
<dbReference type="EMBL" id="CP000029">
    <property type="protein sequence ID" value="AAW53177.1"/>
    <property type="molecule type" value="Genomic_DNA"/>
</dbReference>
<dbReference type="RefSeq" id="WP_001830510.1">
    <property type="nucleotide sequence ID" value="NC_002976.3"/>
</dbReference>
<dbReference type="SMR" id="Q5HKI1"/>
<dbReference type="STRING" id="176279.SERP2364"/>
<dbReference type="KEGG" id="ser:SERP2364"/>
<dbReference type="eggNOG" id="COG0624">
    <property type="taxonomic scope" value="Bacteria"/>
</dbReference>
<dbReference type="HOGENOM" id="CLU_021802_2_2_9"/>
<dbReference type="UniPathway" id="UPA00034">
    <property type="reaction ID" value="UER00021"/>
</dbReference>
<dbReference type="Proteomes" id="UP000000531">
    <property type="component" value="Chromosome"/>
</dbReference>
<dbReference type="GO" id="GO:0046872">
    <property type="term" value="F:metal ion binding"/>
    <property type="evidence" value="ECO:0007669"/>
    <property type="project" value="UniProtKB-KW"/>
</dbReference>
<dbReference type="GO" id="GO:0009014">
    <property type="term" value="F:succinyl-diaminopimelate desuccinylase activity"/>
    <property type="evidence" value="ECO:0007669"/>
    <property type="project" value="UniProtKB-EC"/>
</dbReference>
<dbReference type="GO" id="GO:0019877">
    <property type="term" value="P:diaminopimelate biosynthetic process"/>
    <property type="evidence" value="ECO:0007669"/>
    <property type="project" value="UniProtKB-KW"/>
</dbReference>
<dbReference type="GO" id="GO:0009089">
    <property type="term" value="P:lysine biosynthetic process via diaminopimelate"/>
    <property type="evidence" value="ECO:0007669"/>
    <property type="project" value="UniProtKB-UniPathway"/>
</dbReference>
<dbReference type="CDD" id="cd08659">
    <property type="entry name" value="M20_ArgE_DapE-like"/>
    <property type="match status" value="1"/>
</dbReference>
<dbReference type="Gene3D" id="3.30.70.360">
    <property type="match status" value="1"/>
</dbReference>
<dbReference type="Gene3D" id="3.40.630.10">
    <property type="entry name" value="Zn peptidases"/>
    <property type="match status" value="2"/>
</dbReference>
<dbReference type="InterPro" id="IPR010182">
    <property type="entry name" value="ArgE/DapE"/>
</dbReference>
<dbReference type="InterPro" id="IPR001261">
    <property type="entry name" value="ArgE/DapE_CS"/>
</dbReference>
<dbReference type="InterPro" id="IPR036264">
    <property type="entry name" value="Bact_exopeptidase_dim_dom"/>
</dbReference>
<dbReference type="InterPro" id="IPR002933">
    <property type="entry name" value="Peptidase_M20"/>
</dbReference>
<dbReference type="InterPro" id="IPR011650">
    <property type="entry name" value="Peptidase_M20_dimer"/>
</dbReference>
<dbReference type="InterPro" id="IPR050072">
    <property type="entry name" value="Peptidase_M20A"/>
</dbReference>
<dbReference type="NCBIfam" id="TIGR01910">
    <property type="entry name" value="DapE-ArgE"/>
    <property type="match status" value="1"/>
</dbReference>
<dbReference type="NCBIfam" id="NF006365">
    <property type="entry name" value="PRK08588.1"/>
    <property type="match status" value="1"/>
</dbReference>
<dbReference type="PANTHER" id="PTHR43808">
    <property type="entry name" value="ACETYLORNITHINE DEACETYLASE"/>
    <property type="match status" value="1"/>
</dbReference>
<dbReference type="PANTHER" id="PTHR43808:SF8">
    <property type="entry name" value="PEPTIDASE M20 DIMERISATION DOMAIN-CONTAINING PROTEIN"/>
    <property type="match status" value="1"/>
</dbReference>
<dbReference type="Pfam" id="PF07687">
    <property type="entry name" value="M20_dimer"/>
    <property type="match status" value="1"/>
</dbReference>
<dbReference type="Pfam" id="PF01546">
    <property type="entry name" value="Peptidase_M20"/>
    <property type="match status" value="1"/>
</dbReference>
<dbReference type="SUPFAM" id="SSF55031">
    <property type="entry name" value="Bacterial exopeptidase dimerisation domain"/>
    <property type="match status" value="1"/>
</dbReference>
<dbReference type="SUPFAM" id="SSF53187">
    <property type="entry name" value="Zn-dependent exopeptidases"/>
    <property type="match status" value="1"/>
</dbReference>
<dbReference type="PROSITE" id="PS00758">
    <property type="entry name" value="ARGE_DAPE_CPG2_1"/>
    <property type="match status" value="1"/>
</dbReference>
<dbReference type="PROSITE" id="PS00759">
    <property type="entry name" value="ARGE_DAPE_CPG2_2"/>
    <property type="match status" value="1"/>
</dbReference>
<protein>
    <recommendedName>
        <fullName>Probable succinyl-diaminopimelate desuccinylase</fullName>
        <shortName>SDAP desuccinylase</shortName>
        <ecNumber>3.5.1.18</ecNumber>
    </recommendedName>
</protein>
<keyword id="KW-0028">Amino-acid biosynthesis</keyword>
<keyword id="KW-0170">Cobalt</keyword>
<keyword id="KW-0220">Diaminopimelate biosynthesis</keyword>
<keyword id="KW-0378">Hydrolase</keyword>
<keyword id="KW-0457">Lysine biosynthesis</keyword>
<keyword id="KW-0479">Metal-binding</keyword>
<keyword id="KW-1185">Reference proteome</keyword>
<keyword id="KW-0862">Zinc</keyword>